<name>HYPA_PARDP</name>
<reference key="1">
    <citation type="submission" date="2006-12" db="EMBL/GenBank/DDBJ databases">
        <title>Complete sequence of chromosome 2 of Paracoccus denitrificans PD1222.</title>
        <authorList>
            <person name="Copeland A."/>
            <person name="Lucas S."/>
            <person name="Lapidus A."/>
            <person name="Barry K."/>
            <person name="Detter J.C."/>
            <person name="Glavina del Rio T."/>
            <person name="Hammon N."/>
            <person name="Israni S."/>
            <person name="Dalin E."/>
            <person name="Tice H."/>
            <person name="Pitluck S."/>
            <person name="Munk A.C."/>
            <person name="Brettin T."/>
            <person name="Bruce D."/>
            <person name="Han C."/>
            <person name="Tapia R."/>
            <person name="Gilna P."/>
            <person name="Schmutz J."/>
            <person name="Larimer F."/>
            <person name="Land M."/>
            <person name="Hauser L."/>
            <person name="Kyrpides N."/>
            <person name="Lykidis A."/>
            <person name="Spiro S."/>
            <person name="Richardson D.J."/>
            <person name="Moir J.W.B."/>
            <person name="Ferguson S.J."/>
            <person name="van Spanning R.J.M."/>
            <person name="Richardson P."/>
        </authorList>
    </citation>
    <scope>NUCLEOTIDE SEQUENCE [LARGE SCALE GENOMIC DNA]</scope>
    <source>
        <strain>Pd 1222</strain>
    </source>
</reference>
<protein>
    <recommendedName>
        <fullName evidence="1">Hydrogenase maturation factor HypA</fullName>
    </recommendedName>
</protein>
<evidence type="ECO:0000255" key="1">
    <source>
        <dbReference type="HAMAP-Rule" id="MF_00213"/>
    </source>
</evidence>
<sequence length="113" mass="12548">MHEMSLCEGIRGIVEDQARRHGFSRVTRMRLEIGRFAGVEKAALSFAFDVVMRGSPAEGAVLEMIDLPGRAMCFDCAEQVELDDRLSPCPLCGGGRLMPETGDEMRIRDMEVI</sequence>
<gene>
    <name evidence="1" type="primary">hypA</name>
    <name type="ordered locus">Pden_3107</name>
</gene>
<accession>A1B6P4</accession>
<comment type="function">
    <text evidence="1">Involved in the maturation of [NiFe] hydrogenases. Required for nickel insertion into the metal center of the hydrogenase.</text>
</comment>
<comment type="similarity">
    <text evidence="1">Belongs to the HypA/HybF family.</text>
</comment>
<organism>
    <name type="scientific">Paracoccus denitrificans (strain Pd 1222)</name>
    <dbReference type="NCBI Taxonomy" id="318586"/>
    <lineage>
        <taxon>Bacteria</taxon>
        <taxon>Pseudomonadati</taxon>
        <taxon>Pseudomonadota</taxon>
        <taxon>Alphaproteobacteria</taxon>
        <taxon>Rhodobacterales</taxon>
        <taxon>Paracoccaceae</taxon>
        <taxon>Paracoccus</taxon>
    </lineage>
</organism>
<keyword id="KW-0479">Metal-binding</keyword>
<keyword id="KW-0533">Nickel</keyword>
<keyword id="KW-1185">Reference proteome</keyword>
<keyword id="KW-0862">Zinc</keyword>
<proteinExistence type="inferred from homology"/>
<feature type="chain" id="PRO_1000023847" description="Hydrogenase maturation factor HypA">
    <location>
        <begin position="1"/>
        <end position="113"/>
    </location>
</feature>
<feature type="binding site" evidence="1">
    <location>
        <position position="2"/>
    </location>
    <ligand>
        <name>Ni(2+)</name>
        <dbReference type="ChEBI" id="CHEBI:49786"/>
    </ligand>
</feature>
<feature type="binding site" evidence="1">
    <location>
        <position position="73"/>
    </location>
    <ligand>
        <name>Zn(2+)</name>
        <dbReference type="ChEBI" id="CHEBI:29105"/>
    </ligand>
</feature>
<feature type="binding site" evidence="1">
    <location>
        <position position="76"/>
    </location>
    <ligand>
        <name>Zn(2+)</name>
        <dbReference type="ChEBI" id="CHEBI:29105"/>
    </ligand>
</feature>
<feature type="binding site" evidence="1">
    <location>
        <position position="89"/>
    </location>
    <ligand>
        <name>Zn(2+)</name>
        <dbReference type="ChEBI" id="CHEBI:29105"/>
    </ligand>
</feature>
<feature type="binding site" evidence="1">
    <location>
        <position position="92"/>
    </location>
    <ligand>
        <name>Zn(2+)</name>
        <dbReference type="ChEBI" id="CHEBI:29105"/>
    </ligand>
</feature>
<dbReference type="EMBL" id="CP000490">
    <property type="protein sequence ID" value="ABL71188.1"/>
    <property type="molecule type" value="Genomic_DNA"/>
</dbReference>
<dbReference type="RefSeq" id="WP_011749375.1">
    <property type="nucleotide sequence ID" value="NC_008687.1"/>
</dbReference>
<dbReference type="SMR" id="A1B6P4"/>
<dbReference type="STRING" id="318586.Pden_3107"/>
<dbReference type="EnsemblBacteria" id="ABL71188">
    <property type="protein sequence ID" value="ABL71188"/>
    <property type="gene ID" value="Pden_3107"/>
</dbReference>
<dbReference type="GeneID" id="93452785"/>
<dbReference type="KEGG" id="pde:Pden_3107"/>
<dbReference type="eggNOG" id="COG0375">
    <property type="taxonomic scope" value="Bacteria"/>
</dbReference>
<dbReference type="HOGENOM" id="CLU_126929_0_0_5"/>
<dbReference type="OrthoDB" id="288014at2"/>
<dbReference type="Proteomes" id="UP000000361">
    <property type="component" value="Chromosome 2"/>
</dbReference>
<dbReference type="GO" id="GO:0016151">
    <property type="term" value="F:nickel cation binding"/>
    <property type="evidence" value="ECO:0007669"/>
    <property type="project" value="UniProtKB-UniRule"/>
</dbReference>
<dbReference type="GO" id="GO:0008270">
    <property type="term" value="F:zinc ion binding"/>
    <property type="evidence" value="ECO:0007669"/>
    <property type="project" value="UniProtKB-UniRule"/>
</dbReference>
<dbReference type="GO" id="GO:0051604">
    <property type="term" value="P:protein maturation"/>
    <property type="evidence" value="ECO:0007669"/>
    <property type="project" value="InterPro"/>
</dbReference>
<dbReference type="GO" id="GO:0036211">
    <property type="term" value="P:protein modification process"/>
    <property type="evidence" value="ECO:0007669"/>
    <property type="project" value="UniProtKB-UniRule"/>
</dbReference>
<dbReference type="Gene3D" id="3.30.2320.80">
    <property type="match status" value="1"/>
</dbReference>
<dbReference type="HAMAP" id="MF_00213">
    <property type="entry name" value="HypA_HybF"/>
    <property type="match status" value="1"/>
</dbReference>
<dbReference type="InterPro" id="IPR020538">
    <property type="entry name" value="Hydgase_Ni_incorp_HypA/HybF_CS"/>
</dbReference>
<dbReference type="InterPro" id="IPR000688">
    <property type="entry name" value="HypA/HybF"/>
</dbReference>
<dbReference type="NCBIfam" id="TIGR00100">
    <property type="entry name" value="hypA"/>
    <property type="match status" value="1"/>
</dbReference>
<dbReference type="PANTHER" id="PTHR34535">
    <property type="entry name" value="HYDROGENASE MATURATION FACTOR HYPA"/>
    <property type="match status" value="1"/>
</dbReference>
<dbReference type="PANTHER" id="PTHR34535:SF3">
    <property type="entry name" value="HYDROGENASE MATURATION FACTOR HYPA"/>
    <property type="match status" value="1"/>
</dbReference>
<dbReference type="Pfam" id="PF01155">
    <property type="entry name" value="HypA"/>
    <property type="match status" value="1"/>
</dbReference>
<dbReference type="PIRSF" id="PIRSF004761">
    <property type="entry name" value="Hydrgn_mat_HypA"/>
    <property type="match status" value="1"/>
</dbReference>
<dbReference type="PROSITE" id="PS01249">
    <property type="entry name" value="HYPA"/>
    <property type="match status" value="1"/>
</dbReference>